<sequence length="563" mass="61151">MSDFVDRVTVHVKGGDGGNGSAGIRREKYKPLAGPNGGNGGDGGSVVFVADRNATSLLDYRFMPHRVAGSGTMGLGDNKDGSKGEDLILPVPCGTVVFEARGEQGKAKHPGAQLADLRHEGDRCVVAQGGAGGLGNIALANKTRRAPGFALLGELGEERDVILELKSIADVALVGFPSAGKSSLIAAMSSVKPKIADYPFTTLVPNLGVVIAGDSRYTIADVPGLIPGASEGKGLGLEFLRHIERTEIIAHVIDCATLEPDRDPMSDYHALENELALYADKLELPLGAIPIPERPRIVILNKIDVPEAKELAEFVRPEFEKLGLKVFEISTASHEGLKELNFALSALVHEMREEVANREQAEEEARVVIKPLETKGRRPRRADEGGSALEFTVERRELGNGEVFFEVRGVKPERWVMQTNFDNDEAVGYLADRLAKLGVEDELRRKGAHPGDEVRIGRGARMVEFDWDPTISAGAEMLDGSNLGARGKDLRLEELDPRTHRRSNAERRAQYHEMMDARAAVRDAMMAERKAGHWADPTVDDDRHDETSLFGHGESSEDGETEE</sequence>
<gene>
    <name evidence="1" type="primary">obg</name>
    <name type="ordered locus">BLD_1618</name>
</gene>
<dbReference type="EC" id="3.6.5.-" evidence="1"/>
<dbReference type="EMBL" id="CP000605">
    <property type="protein sequence ID" value="ACD99063.1"/>
    <property type="molecule type" value="Genomic_DNA"/>
</dbReference>
<dbReference type="RefSeq" id="WP_010081727.1">
    <property type="nucleotide sequence ID" value="NC_010816.1"/>
</dbReference>
<dbReference type="SMR" id="B3DPS4"/>
<dbReference type="KEGG" id="blj:BLD_1618"/>
<dbReference type="HOGENOM" id="CLU_011747_1_0_11"/>
<dbReference type="Proteomes" id="UP000002419">
    <property type="component" value="Chromosome"/>
</dbReference>
<dbReference type="GO" id="GO:0005737">
    <property type="term" value="C:cytoplasm"/>
    <property type="evidence" value="ECO:0007669"/>
    <property type="project" value="UniProtKB-SubCell"/>
</dbReference>
<dbReference type="GO" id="GO:0005525">
    <property type="term" value="F:GTP binding"/>
    <property type="evidence" value="ECO:0007669"/>
    <property type="project" value="UniProtKB-UniRule"/>
</dbReference>
<dbReference type="GO" id="GO:0003924">
    <property type="term" value="F:GTPase activity"/>
    <property type="evidence" value="ECO:0007669"/>
    <property type="project" value="UniProtKB-UniRule"/>
</dbReference>
<dbReference type="GO" id="GO:0000287">
    <property type="term" value="F:magnesium ion binding"/>
    <property type="evidence" value="ECO:0007669"/>
    <property type="project" value="InterPro"/>
</dbReference>
<dbReference type="GO" id="GO:0042254">
    <property type="term" value="P:ribosome biogenesis"/>
    <property type="evidence" value="ECO:0007669"/>
    <property type="project" value="UniProtKB-UniRule"/>
</dbReference>
<dbReference type="CDD" id="cd01898">
    <property type="entry name" value="Obg"/>
    <property type="match status" value="1"/>
</dbReference>
<dbReference type="FunFam" id="2.70.210.12:FF:000001">
    <property type="entry name" value="GTPase Obg"/>
    <property type="match status" value="1"/>
</dbReference>
<dbReference type="Gene3D" id="3.30.300.350">
    <property type="entry name" value="GTP-binding protein OBG, C-terminal domain"/>
    <property type="match status" value="1"/>
</dbReference>
<dbReference type="Gene3D" id="2.70.210.12">
    <property type="entry name" value="GTP1/OBG domain"/>
    <property type="match status" value="1"/>
</dbReference>
<dbReference type="Gene3D" id="3.40.50.300">
    <property type="entry name" value="P-loop containing nucleotide triphosphate hydrolases"/>
    <property type="match status" value="1"/>
</dbReference>
<dbReference type="HAMAP" id="MF_01454">
    <property type="entry name" value="GTPase_Obg"/>
    <property type="match status" value="1"/>
</dbReference>
<dbReference type="InterPro" id="IPR031167">
    <property type="entry name" value="G_OBG"/>
</dbReference>
<dbReference type="InterPro" id="IPR006073">
    <property type="entry name" value="GTP-bd"/>
</dbReference>
<dbReference type="InterPro" id="IPR014100">
    <property type="entry name" value="GTP-bd_Obg/CgtA"/>
</dbReference>
<dbReference type="InterPro" id="IPR036346">
    <property type="entry name" value="GTP-bd_prot_GTP1/OBG_C_sf"/>
</dbReference>
<dbReference type="InterPro" id="IPR006074">
    <property type="entry name" value="GTP1-OBG_CS"/>
</dbReference>
<dbReference type="InterPro" id="IPR006169">
    <property type="entry name" value="GTP1_OBG_dom"/>
</dbReference>
<dbReference type="InterPro" id="IPR036726">
    <property type="entry name" value="GTP1_OBG_dom_sf"/>
</dbReference>
<dbReference type="InterPro" id="IPR045086">
    <property type="entry name" value="OBG_GTPase"/>
</dbReference>
<dbReference type="InterPro" id="IPR015349">
    <property type="entry name" value="OCT_dom"/>
</dbReference>
<dbReference type="InterPro" id="IPR027417">
    <property type="entry name" value="P-loop_NTPase"/>
</dbReference>
<dbReference type="NCBIfam" id="TIGR02729">
    <property type="entry name" value="Obg_CgtA"/>
    <property type="match status" value="1"/>
</dbReference>
<dbReference type="NCBIfam" id="TIGR03595">
    <property type="entry name" value="Obg_CgtA_exten"/>
    <property type="match status" value="1"/>
</dbReference>
<dbReference type="NCBIfam" id="NF008954">
    <property type="entry name" value="PRK12296.1"/>
    <property type="match status" value="1"/>
</dbReference>
<dbReference type="NCBIfam" id="NF008955">
    <property type="entry name" value="PRK12297.1"/>
    <property type="match status" value="1"/>
</dbReference>
<dbReference type="NCBIfam" id="NF008956">
    <property type="entry name" value="PRK12299.1"/>
    <property type="match status" value="1"/>
</dbReference>
<dbReference type="PANTHER" id="PTHR11702">
    <property type="entry name" value="DEVELOPMENTALLY REGULATED GTP-BINDING PROTEIN-RELATED"/>
    <property type="match status" value="1"/>
</dbReference>
<dbReference type="PANTHER" id="PTHR11702:SF31">
    <property type="entry name" value="MITOCHONDRIAL RIBOSOME-ASSOCIATED GTPASE 2"/>
    <property type="match status" value="1"/>
</dbReference>
<dbReference type="Pfam" id="PF09269">
    <property type="entry name" value="DUF1967"/>
    <property type="match status" value="1"/>
</dbReference>
<dbReference type="Pfam" id="PF01018">
    <property type="entry name" value="GTP1_OBG"/>
    <property type="match status" value="1"/>
</dbReference>
<dbReference type="Pfam" id="PF01926">
    <property type="entry name" value="MMR_HSR1"/>
    <property type="match status" value="1"/>
</dbReference>
<dbReference type="PRINTS" id="PR00326">
    <property type="entry name" value="GTP1OBG"/>
</dbReference>
<dbReference type="SUPFAM" id="SSF102741">
    <property type="entry name" value="Obg GTP-binding protein C-terminal domain"/>
    <property type="match status" value="1"/>
</dbReference>
<dbReference type="SUPFAM" id="SSF82051">
    <property type="entry name" value="Obg GTP-binding protein N-terminal domain"/>
    <property type="match status" value="1"/>
</dbReference>
<dbReference type="SUPFAM" id="SSF52540">
    <property type="entry name" value="P-loop containing nucleoside triphosphate hydrolases"/>
    <property type="match status" value="1"/>
</dbReference>
<dbReference type="PROSITE" id="PS51710">
    <property type="entry name" value="G_OBG"/>
    <property type="match status" value="1"/>
</dbReference>
<dbReference type="PROSITE" id="PS00905">
    <property type="entry name" value="GTP1_OBG"/>
    <property type="match status" value="1"/>
</dbReference>
<dbReference type="PROSITE" id="PS51883">
    <property type="entry name" value="OBG"/>
    <property type="match status" value="1"/>
</dbReference>
<dbReference type="PROSITE" id="PS51881">
    <property type="entry name" value="OCT"/>
    <property type="match status" value="1"/>
</dbReference>
<name>OBG_BIFLD</name>
<comment type="function">
    <text evidence="1">An essential GTPase which binds GTP, GDP and possibly (p)ppGpp with moderate affinity, with high nucleotide exchange rates and a fairly low GTP hydrolysis rate. Plays a role in control of the cell cycle, stress response, ribosome biogenesis and in those bacteria that undergo differentiation, in morphogenesis control.</text>
</comment>
<comment type="cofactor">
    <cofactor evidence="1">
        <name>Mg(2+)</name>
        <dbReference type="ChEBI" id="CHEBI:18420"/>
    </cofactor>
</comment>
<comment type="subunit">
    <text evidence="1">Monomer.</text>
</comment>
<comment type="subcellular location">
    <subcellularLocation>
        <location evidence="1">Cytoplasm</location>
    </subcellularLocation>
</comment>
<comment type="similarity">
    <text evidence="1">Belongs to the TRAFAC class OBG-HflX-like GTPase superfamily. OBG GTPase family.</text>
</comment>
<reference key="1">
    <citation type="journal article" date="2008" name="BMC Genomics">
        <title>Comparative genomic analysis of the gut bacterium Bifidobacterium longum reveals loci susceptible to deletion during pure culture growth.</title>
        <authorList>
            <person name="Lee J.H."/>
            <person name="Karamychev V.N."/>
            <person name="Kozyavkin S.A."/>
            <person name="Mills D."/>
            <person name="Pavlov A.R."/>
            <person name="Pavlova N.V."/>
            <person name="Polouchine N.N."/>
            <person name="Richardson P.M."/>
            <person name="Shakhova V.V."/>
            <person name="Slesarev A.I."/>
            <person name="Weimer B."/>
            <person name="O'Sullivan D.J."/>
        </authorList>
    </citation>
    <scope>NUCLEOTIDE SEQUENCE [LARGE SCALE GENOMIC DNA]</scope>
    <source>
        <strain>DJO10A</strain>
    </source>
</reference>
<organism>
    <name type="scientific">Bifidobacterium longum (strain DJO10A)</name>
    <dbReference type="NCBI Taxonomy" id="205913"/>
    <lineage>
        <taxon>Bacteria</taxon>
        <taxon>Bacillati</taxon>
        <taxon>Actinomycetota</taxon>
        <taxon>Actinomycetes</taxon>
        <taxon>Bifidobacteriales</taxon>
        <taxon>Bifidobacteriaceae</taxon>
        <taxon>Bifidobacterium</taxon>
    </lineage>
</organism>
<accession>B3DPS4</accession>
<keyword id="KW-0963">Cytoplasm</keyword>
<keyword id="KW-0342">GTP-binding</keyword>
<keyword id="KW-0378">Hydrolase</keyword>
<keyword id="KW-0460">Magnesium</keyword>
<keyword id="KW-0479">Metal-binding</keyword>
<keyword id="KW-0547">Nucleotide-binding</keyword>
<feature type="chain" id="PRO_0000385745" description="GTPase Obg">
    <location>
        <begin position="1"/>
        <end position="563"/>
    </location>
</feature>
<feature type="domain" description="Obg" evidence="3">
    <location>
        <begin position="2"/>
        <end position="168"/>
    </location>
</feature>
<feature type="domain" description="OBG-type G" evidence="1">
    <location>
        <begin position="169"/>
        <end position="349"/>
    </location>
</feature>
<feature type="domain" description="OCT" evidence="2">
    <location>
        <begin position="383"/>
        <end position="469"/>
    </location>
</feature>
<feature type="region of interest" description="Disordered" evidence="4">
    <location>
        <begin position="529"/>
        <end position="563"/>
    </location>
</feature>
<feature type="binding site" evidence="1">
    <location>
        <begin position="175"/>
        <end position="182"/>
    </location>
    <ligand>
        <name>GTP</name>
        <dbReference type="ChEBI" id="CHEBI:37565"/>
    </ligand>
</feature>
<feature type="binding site" evidence="1">
    <location>
        <position position="182"/>
    </location>
    <ligand>
        <name>Mg(2+)</name>
        <dbReference type="ChEBI" id="CHEBI:18420"/>
    </ligand>
</feature>
<feature type="binding site" evidence="1">
    <location>
        <begin position="200"/>
        <end position="204"/>
    </location>
    <ligand>
        <name>GTP</name>
        <dbReference type="ChEBI" id="CHEBI:37565"/>
    </ligand>
</feature>
<feature type="binding site" evidence="1">
    <location>
        <position position="202"/>
    </location>
    <ligand>
        <name>Mg(2+)</name>
        <dbReference type="ChEBI" id="CHEBI:18420"/>
    </ligand>
</feature>
<feature type="binding site" evidence="1">
    <location>
        <begin position="221"/>
        <end position="224"/>
    </location>
    <ligand>
        <name>GTP</name>
        <dbReference type="ChEBI" id="CHEBI:37565"/>
    </ligand>
</feature>
<feature type="binding site" evidence="1">
    <location>
        <begin position="301"/>
        <end position="304"/>
    </location>
    <ligand>
        <name>GTP</name>
        <dbReference type="ChEBI" id="CHEBI:37565"/>
    </ligand>
</feature>
<feature type="binding site" evidence="1">
    <location>
        <begin position="330"/>
        <end position="332"/>
    </location>
    <ligand>
        <name>GTP</name>
        <dbReference type="ChEBI" id="CHEBI:37565"/>
    </ligand>
</feature>
<evidence type="ECO:0000255" key="1">
    <source>
        <dbReference type="HAMAP-Rule" id="MF_01454"/>
    </source>
</evidence>
<evidence type="ECO:0000255" key="2">
    <source>
        <dbReference type="PROSITE-ProRule" id="PRU01229"/>
    </source>
</evidence>
<evidence type="ECO:0000255" key="3">
    <source>
        <dbReference type="PROSITE-ProRule" id="PRU01231"/>
    </source>
</evidence>
<evidence type="ECO:0000256" key="4">
    <source>
        <dbReference type="SAM" id="MobiDB-lite"/>
    </source>
</evidence>
<protein>
    <recommendedName>
        <fullName evidence="1">GTPase Obg</fullName>
        <ecNumber evidence="1">3.6.5.-</ecNumber>
    </recommendedName>
    <alternativeName>
        <fullName evidence="1">GTP-binding protein Obg</fullName>
    </alternativeName>
</protein>
<proteinExistence type="inferred from homology"/>